<evidence type="ECO:0000255" key="1">
    <source>
        <dbReference type="HAMAP-Rule" id="MF_00332"/>
    </source>
</evidence>
<evidence type="ECO:0000256" key="2">
    <source>
        <dbReference type="SAM" id="MobiDB-lite"/>
    </source>
</evidence>
<name>DNAK_SALPC</name>
<comment type="function">
    <text evidence="1">Acts as a chaperone.</text>
</comment>
<comment type="induction">
    <text evidence="1">By stress conditions e.g. heat shock.</text>
</comment>
<comment type="similarity">
    <text evidence="1">Belongs to the heat shock protein 70 family.</text>
</comment>
<protein>
    <recommendedName>
        <fullName evidence="1">Chaperone protein DnaK</fullName>
    </recommendedName>
    <alternativeName>
        <fullName evidence="1">HSP70</fullName>
    </alternativeName>
    <alternativeName>
        <fullName evidence="1">Heat shock 70 kDa protein</fullName>
    </alternativeName>
    <alternativeName>
        <fullName evidence="1">Heat shock protein 70</fullName>
    </alternativeName>
</protein>
<proteinExistence type="inferred from homology"/>
<reference key="1">
    <citation type="journal article" date="2009" name="PLoS ONE">
        <title>Salmonella paratyphi C: genetic divergence from Salmonella choleraesuis and pathogenic convergence with Salmonella typhi.</title>
        <authorList>
            <person name="Liu W.-Q."/>
            <person name="Feng Y."/>
            <person name="Wang Y."/>
            <person name="Zou Q.-H."/>
            <person name="Chen F."/>
            <person name="Guo J.-T."/>
            <person name="Peng Y.-H."/>
            <person name="Jin Y."/>
            <person name="Li Y.-G."/>
            <person name="Hu S.-N."/>
            <person name="Johnston R.N."/>
            <person name="Liu G.-R."/>
            <person name="Liu S.-L."/>
        </authorList>
    </citation>
    <scope>NUCLEOTIDE SEQUENCE [LARGE SCALE GENOMIC DNA]</scope>
    <source>
        <strain>RKS4594</strain>
    </source>
</reference>
<sequence>MGKIIGIDLGTTNSCVAIMDGTQARVLENAEGDRTTPSIIAYTQDGETLVGQPAKRQAVTNPQNTLFAIKRLIGRRFQDEEVQRDVSIMPYKIIGADNGDAWLDVKGQKMAPPQISAEVLKKMKKTAEDYLGEPVTEAVITVPAYFNDAQRQATKDAGRIAGLEVKRIINEPTAAALAYGLDKEVGNRTIAVYDLGGGTFDISIIEIDEVDGEKTFEVLATNGDTHLGGEDFDTRLINYLVDEFKKDQGIDLRNDPLAMQRLKEAAEKAKIELSSAQQTDVNLPYITADATGPKHMNIKVTRAKLESLVEDLVNRSIEPLKVALQDAGLSVSDINDVILVGGQTRMPMVQKKVAEFFGKEPRKDVNPDEAVAIGAAVQGGVLTGDVKDVLLLDVTPLSLGIETMGGVMTPLITKNTTIPTKHSQVFSTAEDNQSAVTIHVLQGERKRASDNKSLGQFNLDGINPAPRGMPQIEVTFDIDADGILHVSAKDKNSGKEQKITIKASSGLNEEEIQKMVRDAEANAESDRKFEELVQTRNQGDHLLHSTRKQVEEAGDKLPADDKTAIESALNALETALKGEDKAAIEAKMQELAQVSQKLMEIAQQQHAQQQAGSADASANNAKDDDVVDAEFEEVKDKK</sequence>
<gene>
    <name evidence="1" type="primary">dnaK</name>
    <name type="ordered locus">SPC_0013</name>
</gene>
<organism>
    <name type="scientific">Salmonella paratyphi C (strain RKS4594)</name>
    <dbReference type="NCBI Taxonomy" id="476213"/>
    <lineage>
        <taxon>Bacteria</taxon>
        <taxon>Pseudomonadati</taxon>
        <taxon>Pseudomonadota</taxon>
        <taxon>Gammaproteobacteria</taxon>
        <taxon>Enterobacterales</taxon>
        <taxon>Enterobacteriaceae</taxon>
        <taxon>Salmonella</taxon>
    </lineage>
</organism>
<accession>C0Q4F3</accession>
<feature type="chain" id="PRO_1000133158" description="Chaperone protein DnaK">
    <location>
        <begin position="1"/>
        <end position="638"/>
    </location>
</feature>
<feature type="region of interest" description="Disordered" evidence="2">
    <location>
        <begin position="603"/>
        <end position="638"/>
    </location>
</feature>
<feature type="compositionally biased region" description="Low complexity" evidence="2">
    <location>
        <begin position="603"/>
        <end position="620"/>
    </location>
</feature>
<feature type="modified residue" description="Phosphothreonine; by autocatalysis" evidence="1">
    <location>
        <position position="199"/>
    </location>
</feature>
<dbReference type="EMBL" id="CP000857">
    <property type="protein sequence ID" value="ACN44208.1"/>
    <property type="molecule type" value="Genomic_DNA"/>
</dbReference>
<dbReference type="RefSeq" id="WP_000516125.1">
    <property type="nucleotide sequence ID" value="NC_012125.1"/>
</dbReference>
<dbReference type="SMR" id="C0Q4F3"/>
<dbReference type="KEGG" id="sei:SPC_0013"/>
<dbReference type="HOGENOM" id="CLU_005965_2_1_6"/>
<dbReference type="Proteomes" id="UP000001599">
    <property type="component" value="Chromosome"/>
</dbReference>
<dbReference type="GO" id="GO:0005524">
    <property type="term" value="F:ATP binding"/>
    <property type="evidence" value="ECO:0007669"/>
    <property type="project" value="UniProtKB-UniRule"/>
</dbReference>
<dbReference type="GO" id="GO:0140662">
    <property type="term" value="F:ATP-dependent protein folding chaperone"/>
    <property type="evidence" value="ECO:0007669"/>
    <property type="project" value="InterPro"/>
</dbReference>
<dbReference type="GO" id="GO:0051082">
    <property type="term" value="F:unfolded protein binding"/>
    <property type="evidence" value="ECO:0007669"/>
    <property type="project" value="InterPro"/>
</dbReference>
<dbReference type="CDD" id="cd10234">
    <property type="entry name" value="ASKHA_NBD_HSP70_DnaK-like"/>
    <property type="match status" value="1"/>
</dbReference>
<dbReference type="FunFam" id="2.60.34.10:FF:000014">
    <property type="entry name" value="Chaperone protein DnaK HSP70"/>
    <property type="match status" value="1"/>
</dbReference>
<dbReference type="FunFam" id="3.30.30.30:FF:000003">
    <property type="entry name" value="Heat shock protein 9"/>
    <property type="match status" value="1"/>
</dbReference>
<dbReference type="FunFam" id="1.20.1270.10:FF:000001">
    <property type="entry name" value="Molecular chaperone DnaK"/>
    <property type="match status" value="1"/>
</dbReference>
<dbReference type="FunFam" id="3.30.420.40:FF:000004">
    <property type="entry name" value="Molecular chaperone DnaK"/>
    <property type="match status" value="1"/>
</dbReference>
<dbReference type="FunFam" id="3.90.640.10:FF:000003">
    <property type="entry name" value="Molecular chaperone DnaK"/>
    <property type="match status" value="1"/>
</dbReference>
<dbReference type="Gene3D" id="1.20.1270.10">
    <property type="match status" value="1"/>
</dbReference>
<dbReference type="Gene3D" id="3.30.420.40">
    <property type="match status" value="2"/>
</dbReference>
<dbReference type="Gene3D" id="3.90.640.10">
    <property type="entry name" value="Actin, Chain A, domain 4"/>
    <property type="match status" value="1"/>
</dbReference>
<dbReference type="Gene3D" id="2.60.34.10">
    <property type="entry name" value="Substrate Binding Domain Of DNAk, Chain A, domain 1"/>
    <property type="match status" value="1"/>
</dbReference>
<dbReference type="HAMAP" id="MF_00332">
    <property type="entry name" value="DnaK"/>
    <property type="match status" value="1"/>
</dbReference>
<dbReference type="InterPro" id="IPR043129">
    <property type="entry name" value="ATPase_NBD"/>
</dbReference>
<dbReference type="InterPro" id="IPR012725">
    <property type="entry name" value="Chaperone_DnaK"/>
</dbReference>
<dbReference type="InterPro" id="IPR018181">
    <property type="entry name" value="Heat_shock_70_CS"/>
</dbReference>
<dbReference type="InterPro" id="IPR029048">
    <property type="entry name" value="HSP70_C_sf"/>
</dbReference>
<dbReference type="InterPro" id="IPR029047">
    <property type="entry name" value="HSP70_peptide-bd_sf"/>
</dbReference>
<dbReference type="InterPro" id="IPR013126">
    <property type="entry name" value="Hsp_70_fam"/>
</dbReference>
<dbReference type="NCBIfam" id="NF001413">
    <property type="entry name" value="PRK00290.1"/>
    <property type="match status" value="1"/>
</dbReference>
<dbReference type="NCBIfam" id="NF003520">
    <property type="entry name" value="PRK05183.1"/>
    <property type="match status" value="1"/>
</dbReference>
<dbReference type="NCBIfam" id="TIGR02350">
    <property type="entry name" value="prok_dnaK"/>
    <property type="match status" value="1"/>
</dbReference>
<dbReference type="PANTHER" id="PTHR19375">
    <property type="entry name" value="HEAT SHOCK PROTEIN 70KDA"/>
    <property type="match status" value="1"/>
</dbReference>
<dbReference type="Pfam" id="PF00012">
    <property type="entry name" value="HSP70"/>
    <property type="match status" value="1"/>
</dbReference>
<dbReference type="PRINTS" id="PR00301">
    <property type="entry name" value="HEATSHOCK70"/>
</dbReference>
<dbReference type="SUPFAM" id="SSF53067">
    <property type="entry name" value="Actin-like ATPase domain"/>
    <property type="match status" value="2"/>
</dbReference>
<dbReference type="SUPFAM" id="SSF100934">
    <property type="entry name" value="Heat shock protein 70kD (HSP70), C-terminal subdomain"/>
    <property type="match status" value="1"/>
</dbReference>
<dbReference type="SUPFAM" id="SSF100920">
    <property type="entry name" value="Heat shock protein 70kD (HSP70), peptide-binding domain"/>
    <property type="match status" value="1"/>
</dbReference>
<dbReference type="PROSITE" id="PS00297">
    <property type="entry name" value="HSP70_1"/>
    <property type="match status" value="1"/>
</dbReference>
<dbReference type="PROSITE" id="PS00329">
    <property type="entry name" value="HSP70_2"/>
    <property type="match status" value="1"/>
</dbReference>
<dbReference type="PROSITE" id="PS01036">
    <property type="entry name" value="HSP70_3"/>
    <property type="match status" value="1"/>
</dbReference>
<keyword id="KW-0067">ATP-binding</keyword>
<keyword id="KW-0143">Chaperone</keyword>
<keyword id="KW-0547">Nucleotide-binding</keyword>
<keyword id="KW-0597">Phosphoprotein</keyword>
<keyword id="KW-0346">Stress response</keyword>